<keyword id="KW-0007">Acetylation</keyword>
<keyword id="KW-0143">Chaperone</keyword>
<keyword id="KW-0156">Chromatin regulator</keyword>
<keyword id="KW-0235">DNA replication</keyword>
<keyword id="KW-1017">Isopeptide bond</keyword>
<keyword id="KW-0539">Nucleus</keyword>
<keyword id="KW-0597">Phosphoprotein</keyword>
<keyword id="KW-1185">Reference proteome</keyword>
<keyword id="KW-0677">Repeat</keyword>
<keyword id="KW-0678">Repressor</keyword>
<keyword id="KW-0804">Transcription</keyword>
<keyword id="KW-0805">Transcription regulation</keyword>
<keyword id="KW-0832">Ubl conjugation</keyword>
<keyword id="KW-0853">WD repeat</keyword>
<protein>
    <recommendedName>
        <fullName>Histone-binding protein RBBP7</fullName>
    </recommendedName>
    <alternativeName>
        <fullName>Nucleosome-remodeling factor subunit RBAP46</fullName>
    </alternativeName>
    <alternativeName>
        <fullName>Retinoblastoma-binding protein 7</fullName>
        <shortName>RBBP-7</shortName>
    </alternativeName>
</protein>
<organism>
    <name type="scientific">Pongo abelii</name>
    <name type="common">Sumatran orangutan</name>
    <name type="synonym">Pongo pygmaeus abelii</name>
    <dbReference type="NCBI Taxonomy" id="9601"/>
    <lineage>
        <taxon>Eukaryota</taxon>
        <taxon>Metazoa</taxon>
        <taxon>Chordata</taxon>
        <taxon>Craniata</taxon>
        <taxon>Vertebrata</taxon>
        <taxon>Euteleostomi</taxon>
        <taxon>Mammalia</taxon>
        <taxon>Eutheria</taxon>
        <taxon>Euarchontoglires</taxon>
        <taxon>Primates</taxon>
        <taxon>Haplorrhini</taxon>
        <taxon>Catarrhini</taxon>
        <taxon>Hominidae</taxon>
        <taxon>Pongo</taxon>
    </lineage>
</organism>
<feature type="initiator methionine" description="Removed" evidence="1">
    <location>
        <position position="1"/>
    </location>
</feature>
<feature type="chain" id="PRO_0000223244" description="Histone-binding protein RBBP7">
    <location>
        <begin position="2"/>
        <end position="426"/>
    </location>
</feature>
<feature type="repeat" description="WD 1">
    <location>
        <begin position="47"/>
        <end position="122"/>
    </location>
</feature>
<feature type="repeat" description="WD 2">
    <location>
        <begin position="128"/>
        <end position="173"/>
    </location>
</feature>
<feature type="repeat" description="WD 3">
    <location>
        <begin position="181"/>
        <end position="217"/>
    </location>
</feature>
<feature type="repeat" description="WD 4">
    <location>
        <begin position="228"/>
        <end position="269"/>
    </location>
</feature>
<feature type="repeat" description="WD 5">
    <location>
        <begin position="275"/>
        <end position="312"/>
    </location>
</feature>
<feature type="repeat" description="WD 6">
    <location>
        <begin position="318"/>
        <end position="370"/>
    </location>
</feature>
<feature type="repeat" description="WD 7">
    <location>
        <begin position="377"/>
        <end position="404"/>
    </location>
</feature>
<feature type="modified residue" description="N-acetylalanine" evidence="1">
    <location>
        <position position="2"/>
    </location>
</feature>
<feature type="modified residue" description="Phosphoserine" evidence="1">
    <location>
        <position position="3"/>
    </location>
</feature>
<feature type="modified residue" description="N6-acetyllysine; alternate" evidence="1">
    <location>
        <position position="4"/>
    </location>
</feature>
<feature type="modified residue" description="Phosphothreonine" evidence="1">
    <location>
        <position position="10"/>
    </location>
</feature>
<feature type="modified residue" description="Phosphoserine" evidence="1">
    <location>
        <position position="95"/>
    </location>
</feature>
<feature type="modified residue" description="N6-acetyllysine" evidence="2">
    <location>
        <position position="119"/>
    </location>
</feature>
<feature type="modified residue" description="N6-acetyllysine; alternate" evidence="2">
    <location>
        <position position="159"/>
    </location>
</feature>
<feature type="modified residue" description="Phosphoserine" evidence="1">
    <location>
        <position position="355"/>
    </location>
</feature>
<feature type="cross-link" description="Glycyl lysine isopeptide (Lys-Gly) (interchain with G-Cter in SUMO2); alternate" evidence="1">
    <location>
        <position position="4"/>
    </location>
</feature>
<feature type="cross-link" description="Glycyl lysine isopeptide (Lys-Gly) (interchain with G-Cter in ubiquitin); alternate" evidence="1">
    <location>
        <position position="4"/>
    </location>
</feature>
<feature type="cross-link" description="Glycyl lysine isopeptide (Lys-Gly) (interchain with G-Cter in SUMO2)" evidence="1">
    <location>
        <position position="101"/>
    </location>
</feature>
<feature type="cross-link" description="Glycyl lysine isopeptide (Lys-Gly) (interchain with G-Cter in SUMO2)" evidence="1">
    <location>
        <position position="155"/>
    </location>
</feature>
<feature type="cross-link" description="Glycyl lysine isopeptide (Lys-Gly) (interchain with G-Cter in SUMO2); alternate" evidence="1">
    <location>
        <position position="159"/>
    </location>
</feature>
<name>RBBP7_PONAB</name>
<evidence type="ECO:0000250" key="1">
    <source>
        <dbReference type="UniProtKB" id="Q16576"/>
    </source>
</evidence>
<evidence type="ECO:0000250" key="2">
    <source>
        <dbReference type="UniProtKB" id="Q60973"/>
    </source>
</evidence>
<evidence type="ECO:0000305" key="3"/>
<reference key="1">
    <citation type="submission" date="2004-11" db="EMBL/GenBank/DDBJ databases">
        <authorList>
            <consortium name="The German cDNA consortium"/>
        </authorList>
    </citation>
    <scope>NUCLEOTIDE SEQUENCE [LARGE SCALE MRNA]</scope>
    <source>
        <tissue>Brain cortex</tissue>
    </source>
</reference>
<gene>
    <name type="primary">RBBP7</name>
</gene>
<comment type="function">
    <text evidence="1 2">Core histone-binding subunit that may target chromatin remodeling factors, histone acetyltransferases and histone deacetylases to their histone substrates in a manner that is regulated by nucleosomal DNA. Component of several complexes which regulate chromatin metabolism. These include the type B histone acetyltransferase (HAT) complex, which is required for chromatin assembly following DNA replication; the core histone deacetylase (HDAC) complex, which promotes histone deacetylation and consequent transcriptional repression; the nucleosome remodeling and histone deacetylase complex (the NuRD complex), which promotes transcriptional repression by histone deacetylation and nucleosome remodeling; and the PRC2/EED-EZH2 complex, which promotes repression of homeotic genes during development; and the NURF (nucleosome remodeling factor) complex (By similarity).</text>
</comment>
<comment type="subunit">
    <text evidence="1 2">Binds directly to helix 1 of the histone fold of histone H4, a region that is not accessible when H4 is in chromatin. Subunit of the type B histone acetyltransferase (HAT) complex, composed of RBBP7 and HAT1. Subunit of the core histone deacetylase (HDAC) complex, which is composed of HDAC1, HDAC2, RBBP4 and RBBP7. The core HDAC complex associates with SIN3A, ARID4B/SAP180, SAP18, SAP30, SAP130, SUDS3/SAP45 and possibly ARID4A/RBP1 and ING1 to form the SIN3 HDAC complex. Component of the nucleosome remodeling and deacetylase (NuRD) repressor complex, composed of core proteins MTA1, MTA2, MTA3, RBBP4, RBBP7, HDAC1, HDAC2, MBD2, MBD3, and peripherally associated proteins CDK2AP1, CDK2AP2, GATAD2A, GATAD2B, CHD3, CHD4 and CHD5. The exact stoichiometry of the NuRD complex is unknown, and some subunits such as MBD2 and MBD3, GATAD2A and GATAD2B, and CHD3, CHD4 and CHD5 define mutually exclusive NuRD complexes. The NuRD complex may interact with MBD3L1. The NuRD complex may interact with MBD3L2. Subunit of the PRC2/EED-EZH2 complex, which is composed of at least EED, EZH2, RBBP4, RBBP7 and SUZ12. The PRC2/EED-EZH2 complex may also associate with HDAC1. Component of the NURF-1 ISWI chromatin remodeling complex (also called the nucleosome-remodeling factor (NURF) complex) at least composed of SMARCA1, BPTF, RBBP4 and RBBP7. Within the complex interacts with SMARCA1. Component of the BPFT-SMARCA1 complex at least composed of SMARCA1, BPFT, RBBP4 and RBBP7; the complex is catalytically inactive and does not remodel chromatin. Within the complex interacts with SMARCA1. Interacts with BRCA1. Interacts with CDK2AP1 (By similarity). Interacts with CENPA. Interacts with CHD3. Interacts with CHD4. Interacts with CREBBP, and this interaction may be enhanced by the binding of phosphorylated CREB1 to CREBBP (By similarity). Interacts with HDAC7 (By similarity). Interacts with MTA1 (By similarity). Interacts with PWWP2B (By similarity). Interacts with RB1 (via viral protein-binding domain) (By similarity). Interacts with SUV39H1 (By similarity).</text>
</comment>
<comment type="subcellular location">
    <subcellularLocation>
        <location evidence="1">Nucleus</location>
    </subcellularLocation>
</comment>
<comment type="similarity">
    <text evidence="3">Belongs to the WD repeat RBAP46/RBAP48/MSI1 family.</text>
</comment>
<proteinExistence type="inferred from homology"/>
<dbReference type="EMBL" id="CR860642">
    <property type="protein sequence ID" value="CAH92762.1"/>
    <property type="molecule type" value="Transcribed_RNA"/>
</dbReference>
<dbReference type="SMR" id="Q5R654"/>
<dbReference type="STRING" id="9601.ENSPPYP00000022548"/>
<dbReference type="eggNOG" id="KOG0264">
    <property type="taxonomic scope" value="Eukaryota"/>
</dbReference>
<dbReference type="InParanoid" id="Q5R654"/>
<dbReference type="Proteomes" id="UP000001595">
    <property type="component" value="Unplaced"/>
</dbReference>
<dbReference type="GO" id="GO:0035098">
    <property type="term" value="C:ESC/E(Z) complex"/>
    <property type="evidence" value="ECO:0000250"/>
    <property type="project" value="UniProtKB"/>
</dbReference>
<dbReference type="GO" id="GO:0005634">
    <property type="term" value="C:nucleus"/>
    <property type="evidence" value="ECO:0000250"/>
    <property type="project" value="UniProtKB"/>
</dbReference>
<dbReference type="GO" id="GO:0016581">
    <property type="term" value="C:NuRD complex"/>
    <property type="evidence" value="ECO:0000250"/>
    <property type="project" value="UniProtKB"/>
</dbReference>
<dbReference type="GO" id="GO:0070370">
    <property type="term" value="P:cellular heat acclimation"/>
    <property type="evidence" value="ECO:0000250"/>
    <property type="project" value="UniProtKB"/>
</dbReference>
<dbReference type="GO" id="GO:0006325">
    <property type="term" value="P:chromatin organization"/>
    <property type="evidence" value="ECO:0007669"/>
    <property type="project" value="UniProtKB-KW"/>
</dbReference>
<dbReference type="GO" id="GO:0006260">
    <property type="term" value="P:DNA replication"/>
    <property type="evidence" value="ECO:0007669"/>
    <property type="project" value="UniProtKB-KW"/>
</dbReference>
<dbReference type="GO" id="GO:0030308">
    <property type="term" value="P:negative regulation of cell growth"/>
    <property type="evidence" value="ECO:0000250"/>
    <property type="project" value="UniProtKB"/>
</dbReference>
<dbReference type="FunFam" id="2.130.10.10:FF:000021">
    <property type="entry name" value="histone-binding protein RBBP4 isoform X1"/>
    <property type="match status" value="1"/>
</dbReference>
<dbReference type="Gene3D" id="2.130.10.10">
    <property type="entry name" value="YVTN repeat-like/Quinoprotein amine dehydrogenase"/>
    <property type="match status" value="1"/>
</dbReference>
<dbReference type="InterPro" id="IPR020472">
    <property type="entry name" value="G-protein_beta_WD-40_rep"/>
</dbReference>
<dbReference type="InterPro" id="IPR022052">
    <property type="entry name" value="Histone-bd_RBBP4-like_N"/>
</dbReference>
<dbReference type="InterPro" id="IPR015943">
    <property type="entry name" value="WD40/YVTN_repeat-like_dom_sf"/>
</dbReference>
<dbReference type="InterPro" id="IPR019775">
    <property type="entry name" value="WD40_repeat_CS"/>
</dbReference>
<dbReference type="InterPro" id="IPR036322">
    <property type="entry name" value="WD40_repeat_dom_sf"/>
</dbReference>
<dbReference type="InterPro" id="IPR001680">
    <property type="entry name" value="WD40_rpt"/>
</dbReference>
<dbReference type="InterPro" id="IPR050459">
    <property type="entry name" value="WD_repeat_RBAP46/RBAP48/MSI1"/>
</dbReference>
<dbReference type="PANTHER" id="PTHR22850">
    <property type="entry name" value="WD40 REPEAT FAMILY"/>
    <property type="match status" value="1"/>
</dbReference>
<dbReference type="Pfam" id="PF12265">
    <property type="entry name" value="CAF1C_H4-bd"/>
    <property type="match status" value="1"/>
</dbReference>
<dbReference type="Pfam" id="PF00400">
    <property type="entry name" value="WD40"/>
    <property type="match status" value="5"/>
</dbReference>
<dbReference type="PRINTS" id="PR00320">
    <property type="entry name" value="GPROTEINBRPT"/>
</dbReference>
<dbReference type="SMART" id="SM00320">
    <property type="entry name" value="WD40"/>
    <property type="match status" value="6"/>
</dbReference>
<dbReference type="SUPFAM" id="SSF50978">
    <property type="entry name" value="WD40 repeat-like"/>
    <property type="match status" value="1"/>
</dbReference>
<dbReference type="PROSITE" id="PS00678">
    <property type="entry name" value="WD_REPEATS_1"/>
    <property type="match status" value="3"/>
</dbReference>
<dbReference type="PROSITE" id="PS50082">
    <property type="entry name" value="WD_REPEATS_2"/>
    <property type="match status" value="4"/>
</dbReference>
<dbReference type="PROSITE" id="PS50294">
    <property type="entry name" value="WD_REPEATS_REGION"/>
    <property type="match status" value="1"/>
</dbReference>
<sequence>MASKEMFEDTVEERVINEEYKIWKKNTPFLYDLVMTHALQWPSLTVQWLPEVTKPEGKDYALHWLVLGTHTSDEQNHLVVARVHIPNDDAQFDASHCDSDKGEFGGFGSVTGKIECEIKINHEGEVNRARYMPQNPHIIATKTPSSGVLVFDYTKHPAKPDPSGECNPDLRLRGHQKEGYGLSWNSNLSGHLLSASDDHTVCLWDINAGPKEGKIVDAKAVFTGHSAVVEDVAWHLLHESLFGSVADDQKLMMWDTRSNTTSKPSHLVDAHTAEVNCLSFNPYSEFILATGSADKTVALWDLRNLKLKLHTFESHKDEIFQVVHWSPHNETILASSGTDRRLNVWDLSKIGEEQSAEDAEDGPPELLFIHGGHTAKISDFSWNPNEPWVICSVSEDNIMQIWQMAENIYNDEESDVTTSELEGQGS</sequence>
<accession>Q5R654</accession>